<organism>
    <name type="scientific">Flavobacterium johnsoniae (strain ATCC 17061 / DSM 2064 / JCM 8514 / BCRC 14874 / CCUG 350202 / NBRC 14942 / NCIMB 11054 / UW101)</name>
    <name type="common">Cytophaga johnsonae</name>
    <dbReference type="NCBI Taxonomy" id="376686"/>
    <lineage>
        <taxon>Bacteria</taxon>
        <taxon>Pseudomonadati</taxon>
        <taxon>Bacteroidota</taxon>
        <taxon>Flavobacteriia</taxon>
        <taxon>Flavobacteriales</taxon>
        <taxon>Flavobacteriaceae</taxon>
        <taxon>Flavobacterium</taxon>
    </lineage>
</organism>
<accession>A5FL33</accession>
<name>ATPD_FLAJ1</name>
<keyword id="KW-0066">ATP synthesis</keyword>
<keyword id="KW-0997">Cell inner membrane</keyword>
<keyword id="KW-1003">Cell membrane</keyword>
<keyword id="KW-0139">CF(1)</keyword>
<keyword id="KW-0375">Hydrogen ion transport</keyword>
<keyword id="KW-0406">Ion transport</keyword>
<keyword id="KW-0472">Membrane</keyword>
<keyword id="KW-0813">Transport</keyword>
<comment type="function">
    <text evidence="1">F(1)F(0) ATP synthase produces ATP from ADP in the presence of a proton or sodium gradient. F-type ATPases consist of two structural domains, F(1) containing the extramembraneous catalytic core and F(0) containing the membrane proton channel, linked together by a central stalk and a peripheral stalk. During catalysis, ATP synthesis in the catalytic domain of F(1) is coupled via a rotary mechanism of the central stalk subunits to proton translocation.</text>
</comment>
<comment type="function">
    <text evidence="1">This protein is part of the stalk that links CF(0) to CF(1). It either transmits conformational changes from CF(0) to CF(1) or is implicated in proton conduction.</text>
</comment>
<comment type="subunit">
    <text evidence="1">F-type ATPases have 2 components, F(1) - the catalytic core - and F(0) - the membrane proton channel. F(1) has five subunits: alpha(3), beta(3), gamma(1), delta(1), epsilon(1). F(0) has three main subunits: a(1), b(2) and c(10-14). The alpha and beta chains form an alternating ring which encloses part of the gamma chain. F(1) is attached to F(0) by a central stalk formed by the gamma and epsilon chains, while a peripheral stalk is formed by the delta and b chains.</text>
</comment>
<comment type="subcellular location">
    <subcellularLocation>
        <location evidence="1">Cell inner membrane</location>
        <topology evidence="1">Peripheral membrane protein</topology>
    </subcellularLocation>
</comment>
<comment type="similarity">
    <text evidence="1">Belongs to the ATPase delta chain family.</text>
</comment>
<proteinExistence type="inferred from homology"/>
<gene>
    <name evidence="1" type="primary">atpH</name>
    <name type="ordered locus">Fjoh_1058</name>
</gene>
<sequence>MASTRAAIRYAKAILDLANSKGVAEAVNNDMKSIASAIETNTELSTFIQNPTTTVEVKESALLEVFADVNGVTKGLFHLLFENKRFEILDAIAVEYNKLFDESNGVEVAKVTTAIPMDAALEAKVLAKVATLSDKKITIENVVDPSIIGGFILRIGDNQYNASVANRLQVLKRELSN</sequence>
<feature type="chain" id="PRO_1000184711" description="ATP synthase subunit delta">
    <location>
        <begin position="1"/>
        <end position="177"/>
    </location>
</feature>
<evidence type="ECO:0000255" key="1">
    <source>
        <dbReference type="HAMAP-Rule" id="MF_01416"/>
    </source>
</evidence>
<dbReference type="EMBL" id="CP000685">
    <property type="protein sequence ID" value="ABQ04091.1"/>
    <property type="molecule type" value="Genomic_DNA"/>
</dbReference>
<dbReference type="RefSeq" id="WP_012023143.1">
    <property type="nucleotide sequence ID" value="NC_009441.1"/>
</dbReference>
<dbReference type="SMR" id="A5FL33"/>
<dbReference type="STRING" id="376686.Fjoh_1058"/>
<dbReference type="KEGG" id="fjo:Fjoh_1058"/>
<dbReference type="eggNOG" id="COG0712">
    <property type="taxonomic scope" value="Bacteria"/>
</dbReference>
<dbReference type="HOGENOM" id="CLU_085114_4_1_10"/>
<dbReference type="OrthoDB" id="9802471at2"/>
<dbReference type="Proteomes" id="UP000006694">
    <property type="component" value="Chromosome"/>
</dbReference>
<dbReference type="GO" id="GO:0005886">
    <property type="term" value="C:plasma membrane"/>
    <property type="evidence" value="ECO:0007669"/>
    <property type="project" value="UniProtKB-SubCell"/>
</dbReference>
<dbReference type="GO" id="GO:0045259">
    <property type="term" value="C:proton-transporting ATP synthase complex"/>
    <property type="evidence" value="ECO:0007669"/>
    <property type="project" value="UniProtKB-KW"/>
</dbReference>
<dbReference type="GO" id="GO:0046933">
    <property type="term" value="F:proton-transporting ATP synthase activity, rotational mechanism"/>
    <property type="evidence" value="ECO:0007669"/>
    <property type="project" value="UniProtKB-UniRule"/>
</dbReference>
<dbReference type="Gene3D" id="1.10.520.20">
    <property type="entry name" value="N-terminal domain of the delta subunit of the F1F0-ATP synthase"/>
    <property type="match status" value="1"/>
</dbReference>
<dbReference type="HAMAP" id="MF_01416">
    <property type="entry name" value="ATP_synth_delta_bact"/>
    <property type="match status" value="1"/>
</dbReference>
<dbReference type="InterPro" id="IPR026015">
    <property type="entry name" value="ATP_synth_OSCP/delta_N_sf"/>
</dbReference>
<dbReference type="InterPro" id="IPR020781">
    <property type="entry name" value="ATPase_OSCP/d_CS"/>
</dbReference>
<dbReference type="InterPro" id="IPR000711">
    <property type="entry name" value="ATPase_OSCP/dsu"/>
</dbReference>
<dbReference type="NCBIfam" id="TIGR01145">
    <property type="entry name" value="ATP_synt_delta"/>
    <property type="match status" value="1"/>
</dbReference>
<dbReference type="PANTHER" id="PTHR11910">
    <property type="entry name" value="ATP SYNTHASE DELTA CHAIN"/>
    <property type="match status" value="1"/>
</dbReference>
<dbReference type="Pfam" id="PF00213">
    <property type="entry name" value="OSCP"/>
    <property type="match status" value="1"/>
</dbReference>
<dbReference type="PRINTS" id="PR00125">
    <property type="entry name" value="ATPASEDELTA"/>
</dbReference>
<dbReference type="SUPFAM" id="SSF47928">
    <property type="entry name" value="N-terminal domain of the delta subunit of the F1F0-ATP synthase"/>
    <property type="match status" value="1"/>
</dbReference>
<dbReference type="PROSITE" id="PS00389">
    <property type="entry name" value="ATPASE_DELTA"/>
    <property type="match status" value="1"/>
</dbReference>
<reference key="1">
    <citation type="journal article" date="2009" name="Appl. Environ. Microbiol.">
        <title>Novel features of the polysaccharide-digesting gliding bacterium Flavobacterium johnsoniae as revealed by genome sequence analysis.</title>
        <authorList>
            <person name="McBride M.J."/>
            <person name="Xie G."/>
            <person name="Martens E.C."/>
            <person name="Lapidus A."/>
            <person name="Henrissat B."/>
            <person name="Rhodes R.G."/>
            <person name="Goltsman E."/>
            <person name="Wang W."/>
            <person name="Xu J."/>
            <person name="Hunnicutt D.W."/>
            <person name="Staroscik A.M."/>
            <person name="Hoover T.R."/>
            <person name="Cheng Y.Q."/>
            <person name="Stein J.L."/>
        </authorList>
    </citation>
    <scope>NUCLEOTIDE SEQUENCE [LARGE SCALE GENOMIC DNA]</scope>
    <source>
        <strain>ATCC 17061 / DSM 2064 / JCM 8514 / BCRC 14874 / CCUG 350202 / NBRC 14942 / NCIMB 11054 / UW101</strain>
    </source>
</reference>
<protein>
    <recommendedName>
        <fullName evidence="1">ATP synthase subunit delta</fullName>
    </recommendedName>
    <alternativeName>
        <fullName evidence="1">ATP synthase F(1) sector subunit delta</fullName>
    </alternativeName>
    <alternativeName>
        <fullName evidence="1">F-type ATPase subunit delta</fullName>
        <shortName evidence="1">F-ATPase subunit delta</shortName>
    </alternativeName>
</protein>